<dbReference type="EMBL" id="BX571857">
    <property type="protein sequence ID" value="CAG43007.1"/>
    <property type="molecule type" value="Genomic_DNA"/>
</dbReference>
<dbReference type="RefSeq" id="WP_000516264.1">
    <property type="nucleotide sequence ID" value="NC_002953.3"/>
</dbReference>
<dbReference type="SMR" id="Q6G9R7"/>
<dbReference type="KEGG" id="sas:SAS1230"/>
<dbReference type="HOGENOM" id="CLU_004131_4_1_9"/>
<dbReference type="GO" id="GO:0032300">
    <property type="term" value="C:mismatch repair complex"/>
    <property type="evidence" value="ECO:0007669"/>
    <property type="project" value="InterPro"/>
</dbReference>
<dbReference type="GO" id="GO:0005524">
    <property type="term" value="F:ATP binding"/>
    <property type="evidence" value="ECO:0007669"/>
    <property type="project" value="InterPro"/>
</dbReference>
<dbReference type="GO" id="GO:0016887">
    <property type="term" value="F:ATP hydrolysis activity"/>
    <property type="evidence" value="ECO:0007669"/>
    <property type="project" value="InterPro"/>
</dbReference>
<dbReference type="GO" id="GO:0140664">
    <property type="term" value="F:ATP-dependent DNA damage sensor activity"/>
    <property type="evidence" value="ECO:0007669"/>
    <property type="project" value="InterPro"/>
</dbReference>
<dbReference type="GO" id="GO:0030983">
    <property type="term" value="F:mismatched DNA binding"/>
    <property type="evidence" value="ECO:0007669"/>
    <property type="project" value="InterPro"/>
</dbReference>
<dbReference type="GO" id="GO:0006298">
    <property type="term" value="P:mismatch repair"/>
    <property type="evidence" value="ECO:0007669"/>
    <property type="project" value="UniProtKB-UniRule"/>
</dbReference>
<dbReference type="CDD" id="cd16926">
    <property type="entry name" value="HATPase_MutL-MLH-PMS-like"/>
    <property type="match status" value="1"/>
</dbReference>
<dbReference type="CDD" id="cd00782">
    <property type="entry name" value="MutL_Trans"/>
    <property type="match status" value="1"/>
</dbReference>
<dbReference type="FunFam" id="3.30.1370.100:FF:000004">
    <property type="entry name" value="DNA mismatch repair endonuclease MutL"/>
    <property type="match status" value="1"/>
</dbReference>
<dbReference type="FunFam" id="3.30.230.10:FF:000036">
    <property type="entry name" value="DNA mismatch repair endonuclease MutL"/>
    <property type="match status" value="1"/>
</dbReference>
<dbReference type="FunFam" id="3.30.565.10:FF:000003">
    <property type="entry name" value="DNA mismatch repair endonuclease MutL"/>
    <property type="match status" value="1"/>
</dbReference>
<dbReference type="Gene3D" id="3.30.230.10">
    <property type="match status" value="1"/>
</dbReference>
<dbReference type="Gene3D" id="3.30.565.10">
    <property type="entry name" value="Histidine kinase-like ATPase, C-terminal domain"/>
    <property type="match status" value="1"/>
</dbReference>
<dbReference type="Gene3D" id="3.30.1540.20">
    <property type="entry name" value="MutL, C-terminal domain, dimerisation subdomain"/>
    <property type="match status" value="1"/>
</dbReference>
<dbReference type="Gene3D" id="3.30.1370.100">
    <property type="entry name" value="MutL, C-terminal domain, regulatory subdomain"/>
    <property type="match status" value="1"/>
</dbReference>
<dbReference type="HAMAP" id="MF_00149">
    <property type="entry name" value="DNA_mis_repair"/>
    <property type="match status" value="1"/>
</dbReference>
<dbReference type="InterPro" id="IPR014762">
    <property type="entry name" value="DNA_mismatch_repair_CS"/>
</dbReference>
<dbReference type="InterPro" id="IPR020667">
    <property type="entry name" value="DNA_mismatch_repair_MutL"/>
</dbReference>
<dbReference type="InterPro" id="IPR013507">
    <property type="entry name" value="DNA_mismatch_S5_2-like"/>
</dbReference>
<dbReference type="InterPro" id="IPR036890">
    <property type="entry name" value="HATPase_C_sf"/>
</dbReference>
<dbReference type="InterPro" id="IPR002099">
    <property type="entry name" value="MutL/Mlh/PMS"/>
</dbReference>
<dbReference type="InterPro" id="IPR038973">
    <property type="entry name" value="MutL/Mlh/Pms-like"/>
</dbReference>
<dbReference type="InterPro" id="IPR014790">
    <property type="entry name" value="MutL_C"/>
</dbReference>
<dbReference type="InterPro" id="IPR042120">
    <property type="entry name" value="MutL_C_dimsub"/>
</dbReference>
<dbReference type="InterPro" id="IPR042121">
    <property type="entry name" value="MutL_C_regsub"/>
</dbReference>
<dbReference type="InterPro" id="IPR037198">
    <property type="entry name" value="MutL_C_sf"/>
</dbReference>
<dbReference type="InterPro" id="IPR020568">
    <property type="entry name" value="Ribosomal_Su5_D2-typ_SF"/>
</dbReference>
<dbReference type="InterPro" id="IPR014721">
    <property type="entry name" value="Ribsml_uS5_D2-typ_fold_subgr"/>
</dbReference>
<dbReference type="NCBIfam" id="TIGR00585">
    <property type="entry name" value="mutl"/>
    <property type="match status" value="1"/>
</dbReference>
<dbReference type="NCBIfam" id="NF000950">
    <property type="entry name" value="PRK00095.1-3"/>
    <property type="match status" value="1"/>
</dbReference>
<dbReference type="PANTHER" id="PTHR10073">
    <property type="entry name" value="DNA MISMATCH REPAIR PROTEIN MLH, PMS, MUTL"/>
    <property type="match status" value="1"/>
</dbReference>
<dbReference type="PANTHER" id="PTHR10073:SF12">
    <property type="entry name" value="DNA MISMATCH REPAIR PROTEIN MLH1"/>
    <property type="match status" value="1"/>
</dbReference>
<dbReference type="Pfam" id="PF01119">
    <property type="entry name" value="DNA_mis_repair"/>
    <property type="match status" value="1"/>
</dbReference>
<dbReference type="Pfam" id="PF13589">
    <property type="entry name" value="HATPase_c_3"/>
    <property type="match status" value="1"/>
</dbReference>
<dbReference type="Pfam" id="PF08676">
    <property type="entry name" value="MutL_C"/>
    <property type="match status" value="1"/>
</dbReference>
<dbReference type="SMART" id="SM01340">
    <property type="entry name" value="DNA_mis_repair"/>
    <property type="match status" value="1"/>
</dbReference>
<dbReference type="SMART" id="SM00853">
    <property type="entry name" value="MutL_C"/>
    <property type="match status" value="1"/>
</dbReference>
<dbReference type="SUPFAM" id="SSF55874">
    <property type="entry name" value="ATPase domain of HSP90 chaperone/DNA topoisomerase II/histidine kinase"/>
    <property type="match status" value="1"/>
</dbReference>
<dbReference type="SUPFAM" id="SSF118116">
    <property type="entry name" value="DNA mismatch repair protein MutL"/>
    <property type="match status" value="1"/>
</dbReference>
<dbReference type="SUPFAM" id="SSF54211">
    <property type="entry name" value="Ribosomal protein S5 domain 2-like"/>
    <property type="match status" value="1"/>
</dbReference>
<dbReference type="PROSITE" id="PS00058">
    <property type="entry name" value="DNA_MISMATCH_REPAIR_1"/>
    <property type="match status" value="1"/>
</dbReference>
<gene>
    <name evidence="1" type="primary">mutL</name>
    <name type="ordered locus">SAS1230</name>
</gene>
<proteinExistence type="inferred from homology"/>
<reference key="1">
    <citation type="journal article" date="2004" name="Proc. Natl. Acad. Sci. U.S.A.">
        <title>Complete genomes of two clinical Staphylococcus aureus strains: evidence for the rapid evolution of virulence and drug resistance.</title>
        <authorList>
            <person name="Holden M.T.G."/>
            <person name="Feil E.J."/>
            <person name="Lindsay J.A."/>
            <person name="Peacock S.J."/>
            <person name="Day N.P.J."/>
            <person name="Enright M.C."/>
            <person name="Foster T.J."/>
            <person name="Moore C.E."/>
            <person name="Hurst L."/>
            <person name="Atkin R."/>
            <person name="Barron A."/>
            <person name="Bason N."/>
            <person name="Bentley S.D."/>
            <person name="Chillingworth C."/>
            <person name="Chillingworth T."/>
            <person name="Churcher C."/>
            <person name="Clark L."/>
            <person name="Corton C."/>
            <person name="Cronin A."/>
            <person name="Doggett J."/>
            <person name="Dowd L."/>
            <person name="Feltwell T."/>
            <person name="Hance Z."/>
            <person name="Harris B."/>
            <person name="Hauser H."/>
            <person name="Holroyd S."/>
            <person name="Jagels K."/>
            <person name="James K.D."/>
            <person name="Lennard N."/>
            <person name="Line A."/>
            <person name="Mayes R."/>
            <person name="Moule S."/>
            <person name="Mungall K."/>
            <person name="Ormond D."/>
            <person name="Quail M.A."/>
            <person name="Rabbinowitsch E."/>
            <person name="Rutherford K.M."/>
            <person name="Sanders M."/>
            <person name="Sharp S."/>
            <person name="Simmonds M."/>
            <person name="Stevens K."/>
            <person name="Whitehead S."/>
            <person name="Barrell B.G."/>
            <person name="Spratt B.G."/>
            <person name="Parkhill J."/>
        </authorList>
    </citation>
    <scope>NUCLEOTIDE SEQUENCE [LARGE SCALE GENOMIC DNA]</scope>
    <source>
        <strain>MSSA476</strain>
    </source>
</reference>
<sequence length="669" mass="76897">MGKIKELQTSLANKIAAGEVVERPSSVVKELLENAIDAGATEISIEVEESGVQSIRVVDNGSGIEAEDLGLVFHRHATSKLDQDEDLFHIRTLGFRGEALASISSVAKVTLKTCTDNANGNEIYVENGEILNHKPAKAKKGTDILVESLFYNTPARLKYIKSLYTELGKITDIVNRMAMSHPDIRIALISDGKTMLSTNGSGRTNEVMAEIYGMKVARDLVHISGDTSDYHIEGFVAKPEHSRSNKHYISIFINGRYIKNFMLNKAILEGYHTLLTIGRFPICYINIEMDPILVDVNVHPTKLEVRLSKEEQLYQLIVSKIQEAFKDRILIPKNNLDYVPKKNKVLHSFEQQKIEFEQRQNTENNQEKTFSSEESNSKPFMVENQNDEIVIREDSYNPFVTKTSESLIADDESSGYNNTREKDEDYFKKQQEILQEMDQTFDSNDDTSVQNYENKASDDYYDVNDIKGTKSKDPKRRIPYMEIVGQVHGTYIIAQNEFGMYMIDQHAAQERIKYEYFRDKIGEVTNEVQDLLIPLTFHFSKDEQLVIDQYKNELQQVGIMLEHFGGHDYIVSSYPVWFPKDEVEEIIKDMIELILEEKKVDIKKLREDVAIMMSCKKSIKANHYLQKHEMSDLIDQLREAEDPFTCPHGRPIIINFSKYELEKLFKRVM</sequence>
<protein>
    <recommendedName>
        <fullName evidence="1">DNA mismatch repair protein MutL</fullName>
    </recommendedName>
</protein>
<comment type="function">
    <text evidence="1">This protein is involved in the repair of mismatches in DNA. It is required for dam-dependent methyl-directed DNA mismatch repair. May act as a 'molecular matchmaker', a protein that promotes the formation of a stable complex between two or more DNA-binding proteins in an ATP-dependent manner without itself being part of a final effector complex.</text>
</comment>
<comment type="similarity">
    <text evidence="1">Belongs to the DNA mismatch repair MutL/HexB family.</text>
</comment>
<evidence type="ECO:0000255" key="1">
    <source>
        <dbReference type="HAMAP-Rule" id="MF_00149"/>
    </source>
</evidence>
<evidence type="ECO:0000256" key="2">
    <source>
        <dbReference type="SAM" id="MobiDB-lite"/>
    </source>
</evidence>
<keyword id="KW-0227">DNA damage</keyword>
<keyword id="KW-0234">DNA repair</keyword>
<organism>
    <name type="scientific">Staphylococcus aureus (strain MSSA476)</name>
    <dbReference type="NCBI Taxonomy" id="282459"/>
    <lineage>
        <taxon>Bacteria</taxon>
        <taxon>Bacillati</taxon>
        <taxon>Bacillota</taxon>
        <taxon>Bacilli</taxon>
        <taxon>Bacillales</taxon>
        <taxon>Staphylococcaceae</taxon>
        <taxon>Staphylococcus</taxon>
    </lineage>
</organism>
<name>MUTL_STAAS</name>
<feature type="chain" id="PRO_0000177972" description="DNA mismatch repair protein MutL">
    <location>
        <begin position="1"/>
        <end position="669"/>
    </location>
</feature>
<feature type="region of interest" description="Disordered" evidence="2">
    <location>
        <begin position="356"/>
        <end position="377"/>
    </location>
</feature>
<feature type="compositionally biased region" description="Polar residues" evidence="2">
    <location>
        <begin position="361"/>
        <end position="377"/>
    </location>
</feature>
<accession>Q6G9R7</accession>